<evidence type="ECO:0000250" key="1">
    <source>
        <dbReference type="UniProtKB" id="P69735"/>
    </source>
</evidence>
<evidence type="ECO:0000250" key="2">
    <source>
        <dbReference type="UniProtKB" id="Q15042"/>
    </source>
</evidence>
<evidence type="ECO:0000256" key="3">
    <source>
        <dbReference type="SAM" id="MobiDB-lite"/>
    </source>
</evidence>
<evidence type="ECO:0000269" key="4">
    <source>
    </source>
</evidence>
<evidence type="ECO:0000269" key="5">
    <source>
    </source>
</evidence>
<evidence type="ECO:0000303" key="6">
    <source>
    </source>
</evidence>
<evidence type="ECO:0000305" key="7"/>
<evidence type="ECO:0000305" key="8">
    <source>
    </source>
</evidence>
<evidence type="ECO:0000305" key="9">
    <source>
    </source>
</evidence>
<evidence type="ECO:0000312" key="10">
    <source>
        <dbReference type="FlyBase" id="FBgn0051935"/>
    </source>
</evidence>
<sequence length="916" mass="104431">MAEEIDDNEFYRENFSADSDWEVFNAQLGEILQKWDVSSDSETRNLKSEEIFSCNWKVEREKLDMLRNGIEVEYHQAILEDEELVRAEAKEITCLQRTSCHHDLMSTGNSFGPPIRSSQELHILARIYGLRRFIVLHPVNPTLNYMRSTSEFNFFLSAVAVVSAEVQSLVPIFVQIYDPKWNYYTGVALAPALRTNFRLIGLEKAPPECRFLMGLLTLFREKVPTSYTQAAMISVCTTYALDTMRIRMPMYVPFDHGLSSEDIVVDGEVSHLEVQQFCALPHGYKPESRTEIYLVYTWPELSEHVAFDSEQRSDFVPAKAPLGKIYLSVEASSYLSCCLRDYQSVAEVTRSLESFVGRNFSGTSSGAEAASNPLDRITEHKLTKRRERSFELPSQAGLTKRLPGPMTESELSELLAYLFPDMHPEMALFPYAKKNFTDKFDPMRIKSAVPDSLVCRLSCLLATCHAHLGSVEGMAQVWAAFTRQLRLLWDNSLMVPGISAGFPDTRTCLLHQKLQMLNVCVERRVQREANSKRKSEGMVGKASSEEEEDEDDDEGEFFDCDDLTAGAGSPTKAVLSLKPEGRLRRLNNERLLEEPDEYLYIPDTQEPVPKTEDQLQDDAEVMLKLGPGSGLTTQMMCTSLLSDMEAFKAANPRGIMEDFIRWYSPKDWEEVTDELGQVKHQLSIRMTTEGNTWQKVWEQAQAVPVSRQKRLFDDTNEALKVLHYLETRKMHEIYNLTVIPLLHSAILKLADILSNAELEDLFSSQIEKLLSDLCRLSRSHSDELPSIKPLLDDLAELERRFYQFKCFERLSGYPKRSSLQQVKLQFEEILRNDNCCTIVNRRLTAAGDGTLYDILIPKLEEDMADRLISKDYIIRLDGDTKTTEKGLYLGPQFMRAIVTGEKLRLCGAFTESTAFV</sequence>
<comment type="function">
    <text evidence="2 5 8 9">Catalytic subunit of the Rab3 GTPase-activating (Rab3GAP) complex composed of Rab3-GAP and Rab3GAP1, which has both GTPase-activating protein (GAP) activity towards Rab3, and guanine nucleotide exchange factor (GEF) activity towards Rab18 (Probable). As part of the Rab3GAP complex, required for the rapid induction and sustained expression of synaptic homeostasis at the neuromuscular junction (NMJ) (Probable). Also participates in the regulation of autophagy in tissues such as larval fat cells and adult muscles (Probable). The Rab3GAP complex, acts as a GAP for Rab3 by converting active Rab3-GTP to the inactive form Rab3-GDP (By similarity). At the neuromuscular junction (NMJ), forms a presynaptic signaling mechanism with Rab3 that regulates progression of synaptic homeostasis at a late stage of vesicle release (Probable). Within this mechanism Rab3-GTP acts, directly or indirectly, to inhibit the progression of synaptic homeostasis, and Rab3-GAP functions to inactivate this action of Rab3-GTP (Probable). The Rab3GAP complex, acts as a GEF for Rab18 by promoting the conversion of inactive Rab18-GDP to the active form Rab18-GTP (By similarity). Regulates autophagy as part of a Rab3GAP-Rab18 module (PubMed:32248620). Once Rab18 is activated by the GEF Rab3GAP complex, the Rab3GAP-Rab18 module localizes to autophagosomes, and regulates autolysosome formation and maturation together with the Rab18 interacting effector, the PI3K/Vps34 Complex I (PubMed:32248620).</text>
</comment>
<comment type="subunit">
    <text evidence="1">The Rab3 GTPase-activating complex is a heterodimer composed of Rab3GAP1 and Rab3-GAP.</text>
</comment>
<comment type="subcellular location">
    <subcellularLocation>
        <location evidence="7">Cytoplasm</location>
    </subcellularLocation>
</comment>
<comment type="similarity">
    <text evidence="7">Belongs to the Rab3-GAP catalytic subunit family.</text>
</comment>
<dbReference type="EMBL" id="AE014134">
    <property type="protein sequence ID" value="AAF51356.2"/>
    <property type="molecule type" value="Genomic_DNA"/>
</dbReference>
<dbReference type="RefSeq" id="NP_608608.2">
    <property type="nucleotide sequence ID" value="NM_134764.3"/>
</dbReference>
<dbReference type="SMR" id="Q9VQ26"/>
<dbReference type="BioGRID" id="59582">
    <property type="interactions" value="2"/>
</dbReference>
<dbReference type="FunCoup" id="Q9VQ26">
    <property type="interactions" value="1300"/>
</dbReference>
<dbReference type="IntAct" id="Q9VQ26">
    <property type="interactions" value="1"/>
</dbReference>
<dbReference type="STRING" id="7227.FBpp0077582"/>
<dbReference type="iPTMnet" id="Q9VQ26"/>
<dbReference type="PaxDb" id="7227-FBpp0077582"/>
<dbReference type="EnsemblMetazoa" id="FBtr0077916">
    <property type="protein sequence ID" value="FBpp0077582"/>
    <property type="gene ID" value="FBgn0051935"/>
</dbReference>
<dbReference type="GeneID" id="33338"/>
<dbReference type="KEGG" id="dme:Dmel_CG31935"/>
<dbReference type="UCSC" id="CG31935-RA">
    <property type="organism name" value="d. melanogaster"/>
</dbReference>
<dbReference type="AGR" id="FB:FBgn0051935"/>
<dbReference type="CTD" id="22930"/>
<dbReference type="FlyBase" id="FBgn0051935">
    <property type="gene designation" value="Rab3GAP1"/>
</dbReference>
<dbReference type="VEuPathDB" id="VectorBase:FBgn0051935"/>
<dbReference type="eggNOG" id="KOG2390">
    <property type="taxonomic scope" value="Eukaryota"/>
</dbReference>
<dbReference type="GeneTree" id="ENSGT00390000006705"/>
<dbReference type="HOGENOM" id="CLU_012561_1_0_1"/>
<dbReference type="InParanoid" id="Q9VQ26"/>
<dbReference type="OMA" id="KYAKHRR"/>
<dbReference type="OrthoDB" id="17346at2759"/>
<dbReference type="PhylomeDB" id="Q9VQ26"/>
<dbReference type="Reactome" id="R-DME-6811436">
    <property type="pathway name" value="COPI-independent Golgi-to-ER retrograde traffic"/>
</dbReference>
<dbReference type="Reactome" id="R-DME-8876198">
    <property type="pathway name" value="RAB GEFs exchange GTP for GDP on RABs"/>
</dbReference>
<dbReference type="BioGRID-ORCS" id="33338">
    <property type="hits" value="0 hits in 1 CRISPR screen"/>
</dbReference>
<dbReference type="GenomeRNAi" id="33338"/>
<dbReference type="PRO" id="PR:Q9VQ26"/>
<dbReference type="Proteomes" id="UP000000803">
    <property type="component" value="Chromosome 2L"/>
</dbReference>
<dbReference type="Bgee" id="FBgn0051935">
    <property type="expression patterns" value="Expressed in saliva-secreting gland and 50 other cell types or tissues"/>
</dbReference>
<dbReference type="ExpressionAtlas" id="Q9VQ26">
    <property type="expression patterns" value="baseline and differential"/>
</dbReference>
<dbReference type="GO" id="GO:0005737">
    <property type="term" value="C:cytoplasm"/>
    <property type="evidence" value="ECO:0000250"/>
    <property type="project" value="ParkinsonsUK-UCL"/>
</dbReference>
<dbReference type="GO" id="GO:0071782">
    <property type="term" value="C:endoplasmic reticulum tubular network"/>
    <property type="evidence" value="ECO:0000250"/>
    <property type="project" value="ParkinsonsUK-UCL"/>
</dbReference>
<dbReference type="GO" id="GO:0098794">
    <property type="term" value="C:postsynapse"/>
    <property type="evidence" value="ECO:0007669"/>
    <property type="project" value="GOC"/>
</dbReference>
<dbReference type="GO" id="GO:0032991">
    <property type="term" value="C:protein-containing complex"/>
    <property type="evidence" value="ECO:0000250"/>
    <property type="project" value="ParkinsonsUK-UCL"/>
</dbReference>
<dbReference type="GO" id="GO:0005096">
    <property type="term" value="F:GTPase activator activity"/>
    <property type="evidence" value="ECO:0000250"/>
    <property type="project" value="UniProtKB"/>
</dbReference>
<dbReference type="GO" id="GO:0031267">
    <property type="term" value="F:small GTPase binding"/>
    <property type="evidence" value="ECO:0000250"/>
    <property type="project" value="UniProtKB"/>
</dbReference>
<dbReference type="GO" id="GO:0097051">
    <property type="term" value="P:establishment of protein localization to endoplasmic reticulum membrane"/>
    <property type="evidence" value="ECO:0000250"/>
    <property type="project" value="ParkinsonsUK-UCL"/>
</dbReference>
<dbReference type="GO" id="GO:0060079">
    <property type="term" value="P:excitatory postsynaptic potential"/>
    <property type="evidence" value="ECO:0000250"/>
    <property type="project" value="ParkinsonsUK-UCL"/>
</dbReference>
<dbReference type="GO" id="GO:0034389">
    <property type="term" value="P:lipid droplet organization"/>
    <property type="evidence" value="ECO:0000250"/>
    <property type="project" value="ParkinsonsUK-UCL"/>
</dbReference>
<dbReference type="GO" id="GO:0016236">
    <property type="term" value="P:macroautophagy"/>
    <property type="evidence" value="ECO:0000315"/>
    <property type="project" value="FlyBase"/>
</dbReference>
<dbReference type="GO" id="GO:2000786">
    <property type="term" value="P:positive regulation of autophagosome assembly"/>
    <property type="evidence" value="ECO:0000318"/>
    <property type="project" value="GO_Central"/>
</dbReference>
<dbReference type="GO" id="GO:1903373">
    <property type="term" value="P:positive regulation of endoplasmic reticulum tubular network organization"/>
    <property type="evidence" value="ECO:0000250"/>
    <property type="project" value="ParkinsonsUK-UCL"/>
</dbReference>
<dbReference type="GO" id="GO:0061646">
    <property type="term" value="P:positive regulation of glutamate neurotransmitter secretion in response to membrane depolarization"/>
    <property type="evidence" value="ECO:0000250"/>
    <property type="project" value="ParkinsonsUK-UCL"/>
</dbReference>
<dbReference type="GO" id="GO:0043547">
    <property type="term" value="P:positive regulation of GTPase activity"/>
    <property type="evidence" value="ECO:0000250"/>
    <property type="project" value="ParkinsonsUK-UCL"/>
</dbReference>
<dbReference type="GO" id="GO:1903233">
    <property type="term" value="P:regulation of calcium ion-dependent exocytosis of neurotransmitter"/>
    <property type="evidence" value="ECO:0000250"/>
    <property type="project" value="ParkinsonsUK-UCL"/>
</dbReference>
<dbReference type="GO" id="GO:0043087">
    <property type="term" value="P:regulation of GTPase activity"/>
    <property type="evidence" value="ECO:0000250"/>
    <property type="project" value="UniProtKB"/>
</dbReference>
<dbReference type="GO" id="GO:0032483">
    <property type="term" value="P:regulation of Rab protein signal transduction"/>
    <property type="evidence" value="ECO:0000250"/>
    <property type="project" value="ParkinsonsUK-UCL"/>
</dbReference>
<dbReference type="GO" id="GO:0048172">
    <property type="term" value="P:regulation of short-term neuronal synaptic plasticity"/>
    <property type="evidence" value="ECO:0000250"/>
    <property type="project" value="ParkinsonsUK-UCL"/>
</dbReference>
<dbReference type="InterPro" id="IPR045700">
    <property type="entry name" value="Rab3GAP1"/>
</dbReference>
<dbReference type="InterPro" id="IPR026147">
    <property type="entry name" value="Rab3GAP1_conserved"/>
</dbReference>
<dbReference type="PANTHER" id="PTHR21422">
    <property type="entry name" value="RAB3 GTPASE-ACTIVATING PROTEIN CATALYTIC SUBUNIT"/>
    <property type="match status" value="1"/>
</dbReference>
<dbReference type="PANTHER" id="PTHR21422:SF9">
    <property type="entry name" value="RAB3 GTPASE-ACTIVATING PROTEIN CATALYTIC SUBUNIT"/>
    <property type="match status" value="1"/>
</dbReference>
<dbReference type="Pfam" id="PF13890">
    <property type="entry name" value="Rab3-GTPase_cat"/>
    <property type="match status" value="1"/>
</dbReference>
<organism>
    <name type="scientific">Drosophila melanogaster</name>
    <name type="common">Fruit fly</name>
    <dbReference type="NCBI Taxonomy" id="7227"/>
    <lineage>
        <taxon>Eukaryota</taxon>
        <taxon>Metazoa</taxon>
        <taxon>Ecdysozoa</taxon>
        <taxon>Arthropoda</taxon>
        <taxon>Hexapoda</taxon>
        <taxon>Insecta</taxon>
        <taxon>Pterygota</taxon>
        <taxon>Neoptera</taxon>
        <taxon>Endopterygota</taxon>
        <taxon>Diptera</taxon>
        <taxon>Brachycera</taxon>
        <taxon>Muscomorpha</taxon>
        <taxon>Ephydroidea</taxon>
        <taxon>Drosophilidae</taxon>
        <taxon>Drosophila</taxon>
        <taxon>Sophophora</taxon>
    </lineage>
</organism>
<protein>
    <recommendedName>
        <fullName evidence="1">Rab3 GTPase-activating protein catalytic subunit</fullName>
    </recommendedName>
</protein>
<name>RB3GP_DROME</name>
<gene>
    <name evidence="6 10" type="primary">Rab3GAP1</name>
    <name evidence="10" type="ORF">CG31935</name>
</gene>
<accession>Q9VQ26</accession>
<reference key="1">
    <citation type="journal article" date="2000" name="Science">
        <title>The genome sequence of Drosophila melanogaster.</title>
        <authorList>
            <person name="Adams M.D."/>
            <person name="Celniker S.E."/>
            <person name="Holt R.A."/>
            <person name="Evans C.A."/>
            <person name="Gocayne J.D."/>
            <person name="Amanatides P.G."/>
            <person name="Scherer S.E."/>
            <person name="Li P.W."/>
            <person name="Hoskins R.A."/>
            <person name="Galle R.F."/>
            <person name="George R.A."/>
            <person name="Lewis S.E."/>
            <person name="Richards S."/>
            <person name="Ashburner M."/>
            <person name="Henderson S.N."/>
            <person name="Sutton G.G."/>
            <person name="Wortman J.R."/>
            <person name="Yandell M.D."/>
            <person name="Zhang Q."/>
            <person name="Chen L.X."/>
            <person name="Brandon R.C."/>
            <person name="Rogers Y.-H.C."/>
            <person name="Blazej R.G."/>
            <person name="Champe M."/>
            <person name="Pfeiffer B.D."/>
            <person name="Wan K.H."/>
            <person name="Doyle C."/>
            <person name="Baxter E.G."/>
            <person name="Helt G."/>
            <person name="Nelson C.R."/>
            <person name="Miklos G.L.G."/>
            <person name="Abril J.F."/>
            <person name="Agbayani A."/>
            <person name="An H.-J."/>
            <person name="Andrews-Pfannkoch C."/>
            <person name="Baldwin D."/>
            <person name="Ballew R.M."/>
            <person name="Basu A."/>
            <person name="Baxendale J."/>
            <person name="Bayraktaroglu L."/>
            <person name="Beasley E.M."/>
            <person name="Beeson K.Y."/>
            <person name="Benos P.V."/>
            <person name="Berman B.P."/>
            <person name="Bhandari D."/>
            <person name="Bolshakov S."/>
            <person name="Borkova D."/>
            <person name="Botchan M.R."/>
            <person name="Bouck J."/>
            <person name="Brokstein P."/>
            <person name="Brottier P."/>
            <person name="Burtis K.C."/>
            <person name="Busam D.A."/>
            <person name="Butler H."/>
            <person name="Cadieu E."/>
            <person name="Center A."/>
            <person name="Chandra I."/>
            <person name="Cherry J.M."/>
            <person name="Cawley S."/>
            <person name="Dahlke C."/>
            <person name="Davenport L.B."/>
            <person name="Davies P."/>
            <person name="de Pablos B."/>
            <person name="Delcher A."/>
            <person name="Deng Z."/>
            <person name="Mays A.D."/>
            <person name="Dew I."/>
            <person name="Dietz S.M."/>
            <person name="Dodson K."/>
            <person name="Doup L.E."/>
            <person name="Downes M."/>
            <person name="Dugan-Rocha S."/>
            <person name="Dunkov B.C."/>
            <person name="Dunn P."/>
            <person name="Durbin K.J."/>
            <person name="Evangelista C.C."/>
            <person name="Ferraz C."/>
            <person name="Ferriera S."/>
            <person name="Fleischmann W."/>
            <person name="Fosler C."/>
            <person name="Gabrielian A.E."/>
            <person name="Garg N.S."/>
            <person name="Gelbart W.M."/>
            <person name="Glasser K."/>
            <person name="Glodek A."/>
            <person name="Gong F."/>
            <person name="Gorrell J.H."/>
            <person name="Gu Z."/>
            <person name="Guan P."/>
            <person name="Harris M."/>
            <person name="Harris N.L."/>
            <person name="Harvey D.A."/>
            <person name="Heiman T.J."/>
            <person name="Hernandez J.R."/>
            <person name="Houck J."/>
            <person name="Hostin D."/>
            <person name="Houston K.A."/>
            <person name="Howland T.J."/>
            <person name="Wei M.-H."/>
            <person name="Ibegwam C."/>
            <person name="Jalali M."/>
            <person name="Kalush F."/>
            <person name="Karpen G.H."/>
            <person name="Ke Z."/>
            <person name="Kennison J.A."/>
            <person name="Ketchum K.A."/>
            <person name="Kimmel B.E."/>
            <person name="Kodira C.D."/>
            <person name="Kraft C.L."/>
            <person name="Kravitz S."/>
            <person name="Kulp D."/>
            <person name="Lai Z."/>
            <person name="Lasko P."/>
            <person name="Lei Y."/>
            <person name="Levitsky A.A."/>
            <person name="Li J.H."/>
            <person name="Li Z."/>
            <person name="Liang Y."/>
            <person name="Lin X."/>
            <person name="Liu X."/>
            <person name="Mattei B."/>
            <person name="McIntosh T.C."/>
            <person name="McLeod M.P."/>
            <person name="McPherson D."/>
            <person name="Merkulov G."/>
            <person name="Milshina N.V."/>
            <person name="Mobarry C."/>
            <person name="Morris J."/>
            <person name="Moshrefi A."/>
            <person name="Mount S.M."/>
            <person name="Moy M."/>
            <person name="Murphy B."/>
            <person name="Murphy L."/>
            <person name="Muzny D.M."/>
            <person name="Nelson D.L."/>
            <person name="Nelson D.R."/>
            <person name="Nelson K.A."/>
            <person name="Nixon K."/>
            <person name="Nusskern D.R."/>
            <person name="Pacleb J.M."/>
            <person name="Palazzolo M."/>
            <person name="Pittman G.S."/>
            <person name="Pan S."/>
            <person name="Pollard J."/>
            <person name="Puri V."/>
            <person name="Reese M.G."/>
            <person name="Reinert K."/>
            <person name="Remington K."/>
            <person name="Saunders R.D.C."/>
            <person name="Scheeler F."/>
            <person name="Shen H."/>
            <person name="Shue B.C."/>
            <person name="Siden-Kiamos I."/>
            <person name="Simpson M."/>
            <person name="Skupski M.P."/>
            <person name="Smith T.J."/>
            <person name="Spier E."/>
            <person name="Spradling A.C."/>
            <person name="Stapleton M."/>
            <person name="Strong R."/>
            <person name="Sun E."/>
            <person name="Svirskas R."/>
            <person name="Tector C."/>
            <person name="Turner R."/>
            <person name="Venter E."/>
            <person name="Wang A.H."/>
            <person name="Wang X."/>
            <person name="Wang Z.-Y."/>
            <person name="Wassarman D.A."/>
            <person name="Weinstock G.M."/>
            <person name="Weissenbach J."/>
            <person name="Williams S.M."/>
            <person name="Woodage T."/>
            <person name="Worley K.C."/>
            <person name="Wu D."/>
            <person name="Yang S."/>
            <person name="Yao Q.A."/>
            <person name="Ye J."/>
            <person name="Yeh R.-F."/>
            <person name="Zaveri J.S."/>
            <person name="Zhan M."/>
            <person name="Zhang G."/>
            <person name="Zhao Q."/>
            <person name="Zheng L."/>
            <person name="Zheng X.H."/>
            <person name="Zhong F.N."/>
            <person name="Zhong W."/>
            <person name="Zhou X."/>
            <person name="Zhu S.C."/>
            <person name="Zhu X."/>
            <person name="Smith H.O."/>
            <person name="Gibbs R.A."/>
            <person name="Myers E.W."/>
            <person name="Rubin G.M."/>
            <person name="Venter J.C."/>
        </authorList>
    </citation>
    <scope>NUCLEOTIDE SEQUENCE [LARGE SCALE GENOMIC DNA]</scope>
    <source>
        <strain>Berkeley</strain>
    </source>
</reference>
<reference key="2">
    <citation type="journal article" date="2002" name="Genome Biol.">
        <title>Annotation of the Drosophila melanogaster euchromatic genome: a systematic review.</title>
        <authorList>
            <person name="Misra S."/>
            <person name="Crosby M.A."/>
            <person name="Mungall C.J."/>
            <person name="Matthews B.B."/>
            <person name="Campbell K.S."/>
            <person name="Hradecky P."/>
            <person name="Huang Y."/>
            <person name="Kaminker J.S."/>
            <person name="Millburn G.H."/>
            <person name="Prochnik S.E."/>
            <person name="Smith C.D."/>
            <person name="Tupy J.L."/>
            <person name="Whitfield E.J."/>
            <person name="Bayraktaroglu L."/>
            <person name="Berman B.P."/>
            <person name="Bettencourt B.R."/>
            <person name="Celniker S.E."/>
            <person name="de Grey A.D.N.J."/>
            <person name="Drysdale R.A."/>
            <person name="Harris N.L."/>
            <person name="Richter J."/>
            <person name="Russo S."/>
            <person name="Schroeder A.J."/>
            <person name="Shu S.Q."/>
            <person name="Stapleton M."/>
            <person name="Yamada C."/>
            <person name="Ashburner M."/>
            <person name="Gelbart W.M."/>
            <person name="Rubin G.M."/>
            <person name="Lewis S.E."/>
        </authorList>
    </citation>
    <scope>GENOME REANNOTATION</scope>
    <source>
        <strain>Berkeley</strain>
    </source>
</reference>
<reference key="3">
    <citation type="journal article" date="2008" name="J. Proteome Res.">
        <title>Phosphoproteome analysis of Drosophila melanogaster embryos.</title>
        <authorList>
            <person name="Zhai B."/>
            <person name="Villen J."/>
            <person name="Beausoleil S.A."/>
            <person name="Mintseris J."/>
            <person name="Gygi S.P."/>
        </authorList>
    </citation>
    <scope>PHOSPHORYLATION [LARGE SCALE ANALYSIS] AT SER-543 AND SER-544</scope>
    <scope>IDENTIFICATION BY MASS SPECTROMETRY</scope>
    <source>
        <tissue>Embryo</tissue>
    </source>
</reference>
<reference key="4">
    <citation type="journal article" date="2011" name="Neuron">
        <title>Rab3-GAP controls the progression of synaptic homeostasis at a late stage of vesicle release.</title>
        <authorList>
            <person name="Mueller M."/>
            <person name="Pym E.C."/>
            <person name="Tong A."/>
            <person name="Davis G.W."/>
        </authorList>
    </citation>
    <scope>FUNCTION</scope>
</reference>
<reference key="5">
    <citation type="journal article" date="2021" name="FEBS J.">
        <title>The Warburg Micro Syndrome-associated Rab3GAP-Rab18 module promotes autolysosome maturation through the Vps34 Complex I.</title>
        <authorList>
            <person name="Takats S."/>
            <person name="Levay L."/>
            <person name="Boda A."/>
            <person name="Toth S."/>
            <person name="Simon-Vecsei Z."/>
            <person name="Rubics A."/>
            <person name="Varga A."/>
            <person name="Lippai M."/>
            <person name="Lorincz P."/>
            <person name="Glatz G."/>
            <person name="Juhasz G."/>
        </authorList>
    </citation>
    <scope>FUNCTION</scope>
</reference>
<keyword id="KW-0963">Cytoplasm</keyword>
<keyword id="KW-0343">GTPase activation</keyword>
<keyword id="KW-0597">Phosphoprotein</keyword>
<keyword id="KW-1185">Reference proteome</keyword>
<proteinExistence type="evidence at protein level"/>
<feature type="chain" id="PRO_0000191661" description="Rab3 GTPase-activating protein catalytic subunit">
    <location>
        <begin position="1"/>
        <end position="916"/>
    </location>
</feature>
<feature type="region of interest" description="Disordered" evidence="3">
    <location>
        <begin position="530"/>
        <end position="574"/>
    </location>
</feature>
<feature type="compositionally biased region" description="Acidic residues" evidence="3">
    <location>
        <begin position="545"/>
        <end position="562"/>
    </location>
</feature>
<feature type="modified residue" description="Phosphoserine" evidence="4">
    <location>
        <position position="543"/>
    </location>
</feature>
<feature type="modified residue" description="Phosphoserine" evidence="4">
    <location>
        <position position="544"/>
    </location>
</feature>